<gene>
    <name evidence="1" type="primary">darP</name>
    <name type="ordered locus">Avin_12730</name>
</gene>
<evidence type="ECO:0000255" key="1">
    <source>
        <dbReference type="HAMAP-Rule" id="MF_00765"/>
    </source>
</evidence>
<reference key="1">
    <citation type="journal article" date="2009" name="J. Bacteriol.">
        <title>Genome sequence of Azotobacter vinelandii, an obligate aerobe specialized to support diverse anaerobic metabolic processes.</title>
        <authorList>
            <person name="Setubal J.C."/>
            <person name="Dos Santos P."/>
            <person name="Goldman B.S."/>
            <person name="Ertesvaag H."/>
            <person name="Espin G."/>
            <person name="Rubio L.M."/>
            <person name="Valla S."/>
            <person name="Almeida N.F."/>
            <person name="Balasubramanian D."/>
            <person name="Cromes L."/>
            <person name="Curatti L."/>
            <person name="Du Z."/>
            <person name="Godsy E."/>
            <person name="Goodner B."/>
            <person name="Hellner-Burris K."/>
            <person name="Hernandez J.A."/>
            <person name="Houmiel K."/>
            <person name="Imperial J."/>
            <person name="Kennedy C."/>
            <person name="Larson T.J."/>
            <person name="Latreille P."/>
            <person name="Ligon L.S."/>
            <person name="Lu J."/>
            <person name="Maerk M."/>
            <person name="Miller N.M."/>
            <person name="Norton S."/>
            <person name="O'Carroll I.P."/>
            <person name="Paulsen I."/>
            <person name="Raulfs E.C."/>
            <person name="Roemer R."/>
            <person name="Rosser J."/>
            <person name="Segura D."/>
            <person name="Slater S."/>
            <person name="Stricklin S.L."/>
            <person name="Studholme D.J."/>
            <person name="Sun J."/>
            <person name="Viana C.J."/>
            <person name="Wallin E."/>
            <person name="Wang B."/>
            <person name="Wheeler C."/>
            <person name="Zhu H."/>
            <person name="Dean D.R."/>
            <person name="Dixon R."/>
            <person name="Wood D."/>
        </authorList>
    </citation>
    <scope>NUCLEOTIDE SEQUENCE [LARGE SCALE GENOMIC DNA]</scope>
    <source>
        <strain>DJ / ATCC BAA-1303</strain>
    </source>
</reference>
<name>DARP_AZOVD</name>
<keyword id="KW-0963">Cytoplasm</keyword>
<keyword id="KW-0690">Ribosome biogenesis</keyword>
<keyword id="KW-0694">RNA-binding</keyword>
<keyword id="KW-0699">rRNA-binding</keyword>
<dbReference type="EMBL" id="CP001157">
    <property type="protein sequence ID" value="ACO77499.1"/>
    <property type="molecule type" value="Genomic_DNA"/>
</dbReference>
<dbReference type="RefSeq" id="WP_012699919.1">
    <property type="nucleotide sequence ID" value="NC_012560.1"/>
</dbReference>
<dbReference type="SMR" id="C1DQ47"/>
<dbReference type="STRING" id="322710.Avin_12730"/>
<dbReference type="EnsemblBacteria" id="ACO77499">
    <property type="protein sequence ID" value="ACO77499"/>
    <property type="gene ID" value="Avin_12730"/>
</dbReference>
<dbReference type="GeneID" id="88184589"/>
<dbReference type="KEGG" id="avn:Avin_12730"/>
<dbReference type="eggNOG" id="COG3028">
    <property type="taxonomic scope" value="Bacteria"/>
</dbReference>
<dbReference type="HOGENOM" id="CLU_106757_4_0_6"/>
<dbReference type="OrthoDB" id="5293604at2"/>
<dbReference type="Proteomes" id="UP000002424">
    <property type="component" value="Chromosome"/>
</dbReference>
<dbReference type="GO" id="GO:0005829">
    <property type="term" value="C:cytosol"/>
    <property type="evidence" value="ECO:0007669"/>
    <property type="project" value="TreeGrafter"/>
</dbReference>
<dbReference type="GO" id="GO:0043022">
    <property type="term" value="F:ribosome binding"/>
    <property type="evidence" value="ECO:0007669"/>
    <property type="project" value="UniProtKB-UniRule"/>
</dbReference>
<dbReference type="GO" id="GO:0019843">
    <property type="term" value="F:rRNA binding"/>
    <property type="evidence" value="ECO:0007669"/>
    <property type="project" value="UniProtKB-UniRule"/>
</dbReference>
<dbReference type="GO" id="GO:1902626">
    <property type="term" value="P:assembly of large subunit precursor of preribosome"/>
    <property type="evidence" value="ECO:0007669"/>
    <property type="project" value="UniProtKB-UniRule"/>
</dbReference>
<dbReference type="CDD" id="cd16331">
    <property type="entry name" value="YjgA-like"/>
    <property type="match status" value="1"/>
</dbReference>
<dbReference type="FunFam" id="1.10.60.30:FF:000002">
    <property type="entry name" value="UPF0307 protein YjgA"/>
    <property type="match status" value="1"/>
</dbReference>
<dbReference type="Gene3D" id="1.10.60.30">
    <property type="entry name" value="PSPTO4464-like domains"/>
    <property type="match status" value="2"/>
</dbReference>
<dbReference type="HAMAP" id="MF_00765">
    <property type="entry name" value="DarP"/>
    <property type="match status" value="1"/>
</dbReference>
<dbReference type="InterPro" id="IPR006839">
    <property type="entry name" value="DarP"/>
</dbReference>
<dbReference type="InterPro" id="IPR023153">
    <property type="entry name" value="DarP_sf"/>
</dbReference>
<dbReference type="NCBIfam" id="NF003593">
    <property type="entry name" value="PRK05255.1-1"/>
    <property type="match status" value="1"/>
</dbReference>
<dbReference type="PANTHER" id="PTHR38101">
    <property type="entry name" value="UPF0307 PROTEIN YJGA"/>
    <property type="match status" value="1"/>
</dbReference>
<dbReference type="PANTHER" id="PTHR38101:SF1">
    <property type="entry name" value="UPF0307 PROTEIN YJGA"/>
    <property type="match status" value="1"/>
</dbReference>
<dbReference type="Pfam" id="PF04751">
    <property type="entry name" value="DarP"/>
    <property type="match status" value="1"/>
</dbReference>
<dbReference type="PIRSF" id="PIRSF016183">
    <property type="entry name" value="UCP016183"/>
    <property type="match status" value="1"/>
</dbReference>
<dbReference type="SUPFAM" id="SSF158710">
    <property type="entry name" value="PSPTO4464-like"/>
    <property type="match status" value="1"/>
</dbReference>
<protein>
    <recommendedName>
        <fullName evidence="1">Dual-action ribosomal maturation protein DarP</fullName>
    </recommendedName>
    <alternativeName>
        <fullName evidence="1">Large ribosomal subunit assembly factor DarP</fullName>
    </alternativeName>
</protein>
<sequence length="172" mass="20153">MSEFHQDLSEEKSKSQVKRELHALQELGERLAGLRPEQLDRLPLTDALRRALLDAPKHTAHIARKRHIQYIGKLMRDQDIDAILALFEQLDASSRQYNERFHALERWRDRLLDGGDEALEAFVGDYPDTDRQHLRGLIRQARHETAQNKPPAASRKIFKYIRDLDESRRGLR</sequence>
<feature type="chain" id="PRO_1000212887" description="Dual-action ribosomal maturation protein DarP">
    <location>
        <begin position="1"/>
        <end position="172"/>
    </location>
</feature>
<proteinExistence type="inferred from homology"/>
<accession>C1DQ47</accession>
<comment type="function">
    <text evidence="1">Member of a network of 50S ribosomal subunit biogenesis factors which assembles along the 30S-50S interface, preventing incorrect 23S rRNA structures from forming. Promotes peptidyl transferase center (PTC) maturation.</text>
</comment>
<comment type="subcellular location">
    <subcellularLocation>
        <location evidence="1">Cytoplasm</location>
    </subcellularLocation>
    <text evidence="1">Associates with late stage pre-50S ribosomal subunits.</text>
</comment>
<comment type="similarity">
    <text evidence="1">Belongs to the DarP family.</text>
</comment>
<organism>
    <name type="scientific">Azotobacter vinelandii (strain DJ / ATCC BAA-1303)</name>
    <dbReference type="NCBI Taxonomy" id="322710"/>
    <lineage>
        <taxon>Bacteria</taxon>
        <taxon>Pseudomonadati</taxon>
        <taxon>Pseudomonadota</taxon>
        <taxon>Gammaproteobacteria</taxon>
        <taxon>Pseudomonadales</taxon>
        <taxon>Pseudomonadaceae</taxon>
        <taxon>Azotobacter</taxon>
    </lineage>
</organism>